<evidence type="ECO:0000255" key="1">
    <source>
        <dbReference type="HAMAP-Rule" id="MF_00183"/>
    </source>
</evidence>
<dbReference type="EC" id="1.1.1.267" evidence="1"/>
<dbReference type="EMBL" id="CP000728">
    <property type="protein sequence ID" value="ABS39449.1"/>
    <property type="molecule type" value="Genomic_DNA"/>
</dbReference>
<dbReference type="RefSeq" id="WP_012100379.1">
    <property type="nucleotide sequence ID" value="NC_009699.1"/>
</dbReference>
<dbReference type="SMR" id="A7GG14"/>
<dbReference type="KEGG" id="cbf:CLI_2482"/>
<dbReference type="HOGENOM" id="CLU_035714_4_0_9"/>
<dbReference type="UniPathway" id="UPA00056">
    <property type="reaction ID" value="UER00092"/>
</dbReference>
<dbReference type="Proteomes" id="UP000002410">
    <property type="component" value="Chromosome"/>
</dbReference>
<dbReference type="GO" id="GO:0030604">
    <property type="term" value="F:1-deoxy-D-xylulose-5-phosphate reductoisomerase activity"/>
    <property type="evidence" value="ECO:0007669"/>
    <property type="project" value="UniProtKB-UniRule"/>
</dbReference>
<dbReference type="GO" id="GO:0030145">
    <property type="term" value="F:manganese ion binding"/>
    <property type="evidence" value="ECO:0007669"/>
    <property type="project" value="TreeGrafter"/>
</dbReference>
<dbReference type="GO" id="GO:0070402">
    <property type="term" value="F:NADPH binding"/>
    <property type="evidence" value="ECO:0007669"/>
    <property type="project" value="InterPro"/>
</dbReference>
<dbReference type="GO" id="GO:0051484">
    <property type="term" value="P:isopentenyl diphosphate biosynthetic process, methylerythritol 4-phosphate pathway involved in terpenoid biosynthetic process"/>
    <property type="evidence" value="ECO:0007669"/>
    <property type="project" value="TreeGrafter"/>
</dbReference>
<dbReference type="FunFam" id="3.40.50.720:FF:000045">
    <property type="entry name" value="1-deoxy-D-xylulose 5-phosphate reductoisomerase"/>
    <property type="match status" value="1"/>
</dbReference>
<dbReference type="Gene3D" id="1.10.1740.10">
    <property type="match status" value="1"/>
</dbReference>
<dbReference type="Gene3D" id="3.40.50.720">
    <property type="entry name" value="NAD(P)-binding Rossmann-like Domain"/>
    <property type="match status" value="1"/>
</dbReference>
<dbReference type="HAMAP" id="MF_00183">
    <property type="entry name" value="DXP_reductoisom"/>
    <property type="match status" value="1"/>
</dbReference>
<dbReference type="InterPro" id="IPR003821">
    <property type="entry name" value="DXP_reductoisomerase"/>
</dbReference>
<dbReference type="InterPro" id="IPR013644">
    <property type="entry name" value="DXP_reductoisomerase_C"/>
</dbReference>
<dbReference type="InterPro" id="IPR013512">
    <property type="entry name" value="DXP_reductoisomerase_N"/>
</dbReference>
<dbReference type="InterPro" id="IPR026877">
    <property type="entry name" value="DXPR_C"/>
</dbReference>
<dbReference type="InterPro" id="IPR036169">
    <property type="entry name" value="DXPR_C_sf"/>
</dbReference>
<dbReference type="InterPro" id="IPR036291">
    <property type="entry name" value="NAD(P)-bd_dom_sf"/>
</dbReference>
<dbReference type="NCBIfam" id="TIGR00243">
    <property type="entry name" value="Dxr"/>
    <property type="match status" value="1"/>
</dbReference>
<dbReference type="NCBIfam" id="NF009114">
    <property type="entry name" value="PRK12464.1"/>
    <property type="match status" value="1"/>
</dbReference>
<dbReference type="PANTHER" id="PTHR30525">
    <property type="entry name" value="1-DEOXY-D-XYLULOSE 5-PHOSPHATE REDUCTOISOMERASE"/>
    <property type="match status" value="1"/>
</dbReference>
<dbReference type="PANTHER" id="PTHR30525:SF0">
    <property type="entry name" value="1-DEOXY-D-XYLULOSE 5-PHOSPHATE REDUCTOISOMERASE, CHLOROPLASTIC"/>
    <property type="match status" value="1"/>
</dbReference>
<dbReference type="Pfam" id="PF08436">
    <property type="entry name" value="DXP_redisom_C"/>
    <property type="match status" value="1"/>
</dbReference>
<dbReference type="Pfam" id="PF02670">
    <property type="entry name" value="DXP_reductoisom"/>
    <property type="match status" value="1"/>
</dbReference>
<dbReference type="Pfam" id="PF13288">
    <property type="entry name" value="DXPR_C"/>
    <property type="match status" value="1"/>
</dbReference>
<dbReference type="PIRSF" id="PIRSF006205">
    <property type="entry name" value="Dxp_reductismrs"/>
    <property type="match status" value="1"/>
</dbReference>
<dbReference type="SUPFAM" id="SSF69055">
    <property type="entry name" value="1-deoxy-D-xylulose-5-phosphate reductoisomerase, C-terminal domain"/>
    <property type="match status" value="1"/>
</dbReference>
<dbReference type="SUPFAM" id="SSF55347">
    <property type="entry name" value="Glyceraldehyde-3-phosphate dehydrogenase-like, C-terminal domain"/>
    <property type="match status" value="1"/>
</dbReference>
<dbReference type="SUPFAM" id="SSF51735">
    <property type="entry name" value="NAD(P)-binding Rossmann-fold domains"/>
    <property type="match status" value="1"/>
</dbReference>
<accession>A7GG14</accession>
<gene>
    <name evidence="1" type="primary">dxr</name>
    <name type="ordered locus">CLI_2482</name>
</gene>
<protein>
    <recommendedName>
        <fullName evidence="1">1-deoxy-D-xylulose 5-phosphate reductoisomerase</fullName>
        <shortName evidence="1">DXP reductoisomerase</shortName>
        <ecNumber evidence="1">1.1.1.267</ecNumber>
    </recommendedName>
    <alternativeName>
        <fullName evidence="1">1-deoxyxylulose-5-phosphate reductoisomerase</fullName>
    </alternativeName>
    <alternativeName>
        <fullName evidence="1">2-C-methyl-D-erythritol 4-phosphate synthase</fullName>
    </alternativeName>
</protein>
<reference key="1">
    <citation type="submission" date="2007-06" db="EMBL/GenBank/DDBJ databases">
        <authorList>
            <person name="Brinkac L.M."/>
            <person name="Daugherty S."/>
            <person name="Dodson R.J."/>
            <person name="Madupu R."/>
            <person name="Brown J.L."/>
            <person name="Bruce D."/>
            <person name="Detter C."/>
            <person name="Munk C."/>
            <person name="Smith L.A."/>
            <person name="Smith T.J."/>
            <person name="White O."/>
            <person name="Brettin T.S."/>
        </authorList>
    </citation>
    <scope>NUCLEOTIDE SEQUENCE [LARGE SCALE GENOMIC DNA]</scope>
    <source>
        <strain>Langeland / NCTC 10281 / Type F</strain>
    </source>
</reference>
<feature type="chain" id="PRO_1000020248" description="1-deoxy-D-xylulose 5-phosphate reductoisomerase">
    <location>
        <begin position="1"/>
        <end position="385"/>
    </location>
</feature>
<feature type="binding site" evidence="1">
    <location>
        <position position="10"/>
    </location>
    <ligand>
        <name>NADPH</name>
        <dbReference type="ChEBI" id="CHEBI:57783"/>
    </ligand>
</feature>
<feature type="binding site" evidence="1">
    <location>
        <position position="11"/>
    </location>
    <ligand>
        <name>NADPH</name>
        <dbReference type="ChEBI" id="CHEBI:57783"/>
    </ligand>
</feature>
<feature type="binding site" evidence="1">
    <location>
        <position position="12"/>
    </location>
    <ligand>
        <name>NADPH</name>
        <dbReference type="ChEBI" id="CHEBI:57783"/>
    </ligand>
</feature>
<feature type="binding site" evidence="1">
    <location>
        <position position="13"/>
    </location>
    <ligand>
        <name>NADPH</name>
        <dbReference type="ChEBI" id="CHEBI:57783"/>
    </ligand>
</feature>
<feature type="binding site" evidence="1">
    <location>
        <position position="37"/>
    </location>
    <ligand>
        <name>NADPH</name>
        <dbReference type="ChEBI" id="CHEBI:57783"/>
    </ligand>
</feature>
<feature type="binding site" evidence="1">
    <location>
        <position position="124"/>
    </location>
    <ligand>
        <name>NADPH</name>
        <dbReference type="ChEBI" id="CHEBI:57783"/>
    </ligand>
</feature>
<feature type="binding site" evidence="1">
    <location>
        <position position="125"/>
    </location>
    <ligand>
        <name>1-deoxy-D-xylulose 5-phosphate</name>
        <dbReference type="ChEBI" id="CHEBI:57792"/>
    </ligand>
</feature>
<feature type="binding site" evidence="1">
    <location>
        <position position="126"/>
    </location>
    <ligand>
        <name>NADPH</name>
        <dbReference type="ChEBI" id="CHEBI:57783"/>
    </ligand>
</feature>
<feature type="binding site" evidence="1">
    <location>
        <position position="150"/>
    </location>
    <ligand>
        <name>Mn(2+)</name>
        <dbReference type="ChEBI" id="CHEBI:29035"/>
    </ligand>
</feature>
<feature type="binding site" evidence="1">
    <location>
        <position position="151"/>
    </location>
    <ligand>
        <name>1-deoxy-D-xylulose 5-phosphate</name>
        <dbReference type="ChEBI" id="CHEBI:57792"/>
    </ligand>
</feature>
<feature type="binding site" evidence="1">
    <location>
        <position position="152"/>
    </location>
    <ligand>
        <name>1-deoxy-D-xylulose 5-phosphate</name>
        <dbReference type="ChEBI" id="CHEBI:57792"/>
    </ligand>
</feature>
<feature type="binding site" evidence="1">
    <location>
        <position position="152"/>
    </location>
    <ligand>
        <name>Mn(2+)</name>
        <dbReference type="ChEBI" id="CHEBI:29035"/>
    </ligand>
</feature>
<feature type="binding site" evidence="1">
    <location>
        <position position="176"/>
    </location>
    <ligand>
        <name>1-deoxy-D-xylulose 5-phosphate</name>
        <dbReference type="ChEBI" id="CHEBI:57792"/>
    </ligand>
</feature>
<feature type="binding site" evidence="1">
    <location>
        <position position="199"/>
    </location>
    <ligand>
        <name>1-deoxy-D-xylulose 5-phosphate</name>
        <dbReference type="ChEBI" id="CHEBI:57792"/>
    </ligand>
</feature>
<feature type="binding site" evidence="1">
    <location>
        <position position="205"/>
    </location>
    <ligand>
        <name>NADPH</name>
        <dbReference type="ChEBI" id="CHEBI:57783"/>
    </ligand>
</feature>
<feature type="binding site" evidence="1">
    <location>
        <position position="212"/>
    </location>
    <ligand>
        <name>1-deoxy-D-xylulose 5-phosphate</name>
        <dbReference type="ChEBI" id="CHEBI:57792"/>
    </ligand>
</feature>
<feature type="binding site" evidence="1">
    <location>
        <position position="217"/>
    </location>
    <ligand>
        <name>1-deoxy-D-xylulose 5-phosphate</name>
        <dbReference type="ChEBI" id="CHEBI:57792"/>
    </ligand>
</feature>
<feature type="binding site" evidence="1">
    <location>
        <position position="218"/>
    </location>
    <ligand>
        <name>1-deoxy-D-xylulose 5-phosphate</name>
        <dbReference type="ChEBI" id="CHEBI:57792"/>
    </ligand>
</feature>
<feature type="binding site" evidence="1">
    <location>
        <position position="221"/>
    </location>
    <ligand>
        <name>1-deoxy-D-xylulose 5-phosphate</name>
        <dbReference type="ChEBI" id="CHEBI:57792"/>
    </ligand>
</feature>
<feature type="binding site" evidence="1">
    <location>
        <position position="221"/>
    </location>
    <ligand>
        <name>Mn(2+)</name>
        <dbReference type="ChEBI" id="CHEBI:29035"/>
    </ligand>
</feature>
<organism>
    <name type="scientific">Clostridium botulinum (strain Langeland / NCTC 10281 / Type F)</name>
    <dbReference type="NCBI Taxonomy" id="441772"/>
    <lineage>
        <taxon>Bacteria</taxon>
        <taxon>Bacillati</taxon>
        <taxon>Bacillota</taxon>
        <taxon>Clostridia</taxon>
        <taxon>Eubacteriales</taxon>
        <taxon>Clostridiaceae</taxon>
        <taxon>Clostridium</taxon>
    </lineage>
</organism>
<proteinExistence type="inferred from homology"/>
<name>DXR_CLOBL</name>
<sequence length="385" mass="43068">MKNITILGATGSIGTQTLDVIRREKEELKLVAISANKSYKKVIEIIKEFKPKYTVLMEENAFKIVEDFCIDNKIDTKVLKGMEGMIYISTLEEVNTVVTSVVGMIGLVPTIKAIESGKDIALANKETLVVAGELVISKAKEHNVNILPVDSEHGAIFQCLRGNKKEEVKNIIVTASGGPFRGKKKEELIDVKPEHALKHPKWNMGRKISIDSATLMNKGLEVIEAHFLFGVDYENIKVVVHPQSIVHSMVEYKDGSVIAQMATPDMKLPIQYALNYPNRKESQIEPLDFYKISNLTFEKPDMDTFLPLKLAYEAGKKGGVMPAILNGANEVAVDLFLKGKIEFLQIGDLLQECMNKFYKSMEATLENVISVDKEVREYLGKKYDI</sequence>
<comment type="function">
    <text evidence="1">Catalyzes the NADPH-dependent rearrangement and reduction of 1-deoxy-D-xylulose-5-phosphate (DXP) to 2-C-methyl-D-erythritol 4-phosphate (MEP).</text>
</comment>
<comment type="catalytic activity">
    <reaction evidence="1">
        <text>2-C-methyl-D-erythritol 4-phosphate + NADP(+) = 1-deoxy-D-xylulose 5-phosphate + NADPH + H(+)</text>
        <dbReference type="Rhea" id="RHEA:13717"/>
        <dbReference type="ChEBI" id="CHEBI:15378"/>
        <dbReference type="ChEBI" id="CHEBI:57783"/>
        <dbReference type="ChEBI" id="CHEBI:57792"/>
        <dbReference type="ChEBI" id="CHEBI:58262"/>
        <dbReference type="ChEBI" id="CHEBI:58349"/>
        <dbReference type="EC" id="1.1.1.267"/>
    </reaction>
    <physiologicalReaction direction="right-to-left" evidence="1">
        <dbReference type="Rhea" id="RHEA:13719"/>
    </physiologicalReaction>
</comment>
<comment type="cofactor">
    <cofactor evidence="1">
        <name>Mg(2+)</name>
        <dbReference type="ChEBI" id="CHEBI:18420"/>
    </cofactor>
    <cofactor evidence="1">
        <name>Mn(2+)</name>
        <dbReference type="ChEBI" id="CHEBI:29035"/>
    </cofactor>
</comment>
<comment type="pathway">
    <text evidence="1">Isoprenoid biosynthesis; isopentenyl diphosphate biosynthesis via DXP pathway; isopentenyl diphosphate from 1-deoxy-D-xylulose 5-phosphate: step 1/6.</text>
</comment>
<comment type="similarity">
    <text evidence="1">Belongs to the DXR family.</text>
</comment>
<keyword id="KW-0414">Isoprene biosynthesis</keyword>
<keyword id="KW-0464">Manganese</keyword>
<keyword id="KW-0479">Metal-binding</keyword>
<keyword id="KW-0521">NADP</keyword>
<keyword id="KW-0560">Oxidoreductase</keyword>